<accession>Q9UGP8</accession>
<accession>O95380</accession>
<accession>Q5THN4</accession>
<accession>Q86VS9</accession>
<accession>Q8IWL0</accession>
<accession>Q9NTE0</accession>
<evidence type="ECO:0000250" key="1">
    <source>
        <dbReference type="UniProtKB" id="P82008"/>
    </source>
</evidence>
<evidence type="ECO:0000250" key="2">
    <source>
        <dbReference type="UniProtKB" id="Q8VHE0"/>
    </source>
</evidence>
<evidence type="ECO:0000255" key="3"/>
<evidence type="ECO:0000255" key="4">
    <source>
        <dbReference type="PROSITE-ProRule" id="PRU00286"/>
    </source>
</evidence>
<evidence type="ECO:0000256" key="5">
    <source>
        <dbReference type="SAM" id="MobiDB-lite"/>
    </source>
</evidence>
<evidence type="ECO:0000269" key="6">
    <source>
    </source>
</evidence>
<evidence type="ECO:0000269" key="7">
    <source>
    </source>
</evidence>
<evidence type="ECO:0000269" key="8">
    <source>
    </source>
</evidence>
<evidence type="ECO:0000269" key="9">
    <source>
    </source>
</evidence>
<evidence type="ECO:0000269" key="10">
    <source>
    </source>
</evidence>
<evidence type="ECO:0000303" key="11">
    <source>
    </source>
</evidence>
<evidence type="ECO:0000303" key="12">
    <source>
    </source>
</evidence>
<evidence type="ECO:0000305" key="13"/>
<evidence type="ECO:0000312" key="14">
    <source>
        <dbReference type="HGNC" id="HGNC:21082"/>
    </source>
</evidence>
<evidence type="ECO:0007744" key="15">
    <source>
    </source>
</evidence>
<evidence type="ECO:0007744" key="16">
    <source>
    </source>
</evidence>
<sequence>MAGQQFQYDDSGNTFFYFLTSFVGLIVIPATYYLWPRDQNAEQIRLKNIRKVYGRCMWYRLRLLKPQPNIIPTVKKIVLLAGWALFLFLAYKVSKTDREYQEYNPYEVLNLDPGATVAEIKKQYRLLSLKYHPDKGGDEVMFMRIAKAYAALTDEESRKNWEEFGNPDGPQATSFGIALPAWIVDQKNSILVLLVYGLAFMVILPVVVGSWWYRSIRYSGDQILIRTTQIYTYFVYKTRNMDMKRLIMVLAGASEFDPQYNKDATSRPTDNILIPQLIREIGSINLKKNEPPLTCPYSLKARVLLLSHLARMKIPETLEEDQQFMLKKCPALLQEMVNVICQLIVMARNREEREFRAPTLASLENCMKLSQMAVQGLQQFKSPLLQLPHIEEDNLRRVSNHKKYKIKTIQDLVSLKESDRHTLLHFLEDEKYEEVMAVLGSFPYVTMDIKSQVLDDEDSNNITVGSLVTVLVKLTRQTMAEVFEKEQSICAAEEQPAEDGQGETNKNRTKGGWQQKSKGPKKTAKSKKKKPLKKKPTPVLLPQSKQQKQKQANGVVGNEAAVKEDEEEVSDKGSDSEEEETNRDSQSEKDDGSDRDSDREQDEKQNKDDEAEWQELQQSIQRKERALLETKSKITHPVYSLYFPEEKQEWWWLYIADRKEQTLISMPYHVCTLKDTEEVELKFPAPGKPGNYQYTVFLRSDSYMGLDQIKPLKLEVHEAKPVPENHPQWDTAIEGDEDQEDSEGFEDSFEEEEEEEEDDD</sequence>
<reference key="1">
    <citation type="journal article" date="1999" name="Biol. Chem.">
        <title>Molecular characterization of a novel mammalian DnaJ-like Sec63p homolog.</title>
        <authorList>
            <person name="Skowronek M.H."/>
            <person name="Rotter M."/>
            <person name="Haas I.G."/>
        </authorList>
    </citation>
    <scope>NUCLEOTIDE SEQUENCE [MRNA]</scope>
</reference>
<reference key="2">
    <citation type="journal article" date="2000" name="J. Biol. Chem.">
        <title>Mammalian Sec61 is associated with Sec62 and Sec63.</title>
        <authorList>
            <person name="Meyer H.-A."/>
            <person name="Grau H."/>
            <person name="Kraft R."/>
            <person name="Kostka S."/>
            <person name="Prehn S."/>
            <person name="Kalies K.-U."/>
            <person name="Hartmann E."/>
        </authorList>
    </citation>
    <scope>NUCLEOTIDE SEQUENCE [MRNA]</scope>
</reference>
<reference key="3">
    <citation type="journal article" date="2003" name="Nature">
        <title>The DNA sequence and analysis of human chromosome 6.</title>
        <authorList>
            <person name="Mungall A.J."/>
            <person name="Palmer S.A."/>
            <person name="Sims S.K."/>
            <person name="Edwards C.A."/>
            <person name="Ashurst J.L."/>
            <person name="Wilming L."/>
            <person name="Jones M.C."/>
            <person name="Horton R."/>
            <person name="Hunt S.E."/>
            <person name="Scott C.E."/>
            <person name="Gilbert J.G.R."/>
            <person name="Clamp M.E."/>
            <person name="Bethel G."/>
            <person name="Milne S."/>
            <person name="Ainscough R."/>
            <person name="Almeida J.P."/>
            <person name="Ambrose K.D."/>
            <person name="Andrews T.D."/>
            <person name="Ashwell R.I.S."/>
            <person name="Babbage A.K."/>
            <person name="Bagguley C.L."/>
            <person name="Bailey J."/>
            <person name="Banerjee R."/>
            <person name="Barker D.J."/>
            <person name="Barlow K.F."/>
            <person name="Bates K."/>
            <person name="Beare D.M."/>
            <person name="Beasley H."/>
            <person name="Beasley O."/>
            <person name="Bird C.P."/>
            <person name="Blakey S.E."/>
            <person name="Bray-Allen S."/>
            <person name="Brook J."/>
            <person name="Brown A.J."/>
            <person name="Brown J.Y."/>
            <person name="Burford D.C."/>
            <person name="Burrill W."/>
            <person name="Burton J."/>
            <person name="Carder C."/>
            <person name="Carter N.P."/>
            <person name="Chapman J.C."/>
            <person name="Clark S.Y."/>
            <person name="Clark G."/>
            <person name="Clee C.M."/>
            <person name="Clegg S."/>
            <person name="Cobley V."/>
            <person name="Collier R.E."/>
            <person name="Collins J.E."/>
            <person name="Colman L.K."/>
            <person name="Corby N.R."/>
            <person name="Coville G.J."/>
            <person name="Culley K.M."/>
            <person name="Dhami P."/>
            <person name="Davies J."/>
            <person name="Dunn M."/>
            <person name="Earthrowl M.E."/>
            <person name="Ellington A.E."/>
            <person name="Evans K.A."/>
            <person name="Faulkner L."/>
            <person name="Francis M.D."/>
            <person name="Frankish A."/>
            <person name="Frankland J."/>
            <person name="French L."/>
            <person name="Garner P."/>
            <person name="Garnett J."/>
            <person name="Ghori M.J."/>
            <person name="Gilby L.M."/>
            <person name="Gillson C.J."/>
            <person name="Glithero R.J."/>
            <person name="Grafham D.V."/>
            <person name="Grant M."/>
            <person name="Gribble S."/>
            <person name="Griffiths C."/>
            <person name="Griffiths M.N.D."/>
            <person name="Hall R."/>
            <person name="Halls K.S."/>
            <person name="Hammond S."/>
            <person name="Harley J.L."/>
            <person name="Hart E.A."/>
            <person name="Heath P.D."/>
            <person name="Heathcott R."/>
            <person name="Holmes S.J."/>
            <person name="Howden P.J."/>
            <person name="Howe K.L."/>
            <person name="Howell G.R."/>
            <person name="Huckle E."/>
            <person name="Humphray S.J."/>
            <person name="Humphries M.D."/>
            <person name="Hunt A.R."/>
            <person name="Johnson C.M."/>
            <person name="Joy A.A."/>
            <person name="Kay M."/>
            <person name="Keenan S.J."/>
            <person name="Kimberley A.M."/>
            <person name="King A."/>
            <person name="Laird G.K."/>
            <person name="Langford C."/>
            <person name="Lawlor S."/>
            <person name="Leongamornlert D.A."/>
            <person name="Leversha M."/>
            <person name="Lloyd C.R."/>
            <person name="Lloyd D.M."/>
            <person name="Loveland J.E."/>
            <person name="Lovell J."/>
            <person name="Martin S."/>
            <person name="Mashreghi-Mohammadi M."/>
            <person name="Maslen G.L."/>
            <person name="Matthews L."/>
            <person name="McCann O.T."/>
            <person name="McLaren S.J."/>
            <person name="McLay K."/>
            <person name="McMurray A."/>
            <person name="Moore M.J.F."/>
            <person name="Mullikin J.C."/>
            <person name="Niblett D."/>
            <person name="Nickerson T."/>
            <person name="Novik K.L."/>
            <person name="Oliver K."/>
            <person name="Overton-Larty E.K."/>
            <person name="Parker A."/>
            <person name="Patel R."/>
            <person name="Pearce A.V."/>
            <person name="Peck A.I."/>
            <person name="Phillimore B.J.C.T."/>
            <person name="Phillips S."/>
            <person name="Plumb R.W."/>
            <person name="Porter K.M."/>
            <person name="Ramsey Y."/>
            <person name="Ranby S.A."/>
            <person name="Rice C.M."/>
            <person name="Ross M.T."/>
            <person name="Searle S.M."/>
            <person name="Sehra H.K."/>
            <person name="Sheridan E."/>
            <person name="Skuce C.D."/>
            <person name="Smith S."/>
            <person name="Smith M."/>
            <person name="Spraggon L."/>
            <person name="Squares S.L."/>
            <person name="Steward C.A."/>
            <person name="Sycamore N."/>
            <person name="Tamlyn-Hall G."/>
            <person name="Tester J."/>
            <person name="Theaker A.J."/>
            <person name="Thomas D.W."/>
            <person name="Thorpe A."/>
            <person name="Tracey A."/>
            <person name="Tromans A."/>
            <person name="Tubby B."/>
            <person name="Wall M."/>
            <person name="Wallis J.M."/>
            <person name="West A.P."/>
            <person name="White S.S."/>
            <person name="Whitehead S.L."/>
            <person name="Whittaker H."/>
            <person name="Wild A."/>
            <person name="Willey D.J."/>
            <person name="Wilmer T.E."/>
            <person name="Wood J.M."/>
            <person name="Wray P.W."/>
            <person name="Wyatt J.C."/>
            <person name="Young L."/>
            <person name="Younger R.M."/>
            <person name="Bentley D.R."/>
            <person name="Coulson A."/>
            <person name="Durbin R.M."/>
            <person name="Hubbard T."/>
            <person name="Sulston J.E."/>
            <person name="Dunham I."/>
            <person name="Rogers J."/>
            <person name="Beck S."/>
        </authorList>
    </citation>
    <scope>NUCLEOTIDE SEQUENCE [LARGE SCALE GENOMIC DNA]</scope>
    <scope>VARIANT ILE-556</scope>
</reference>
<reference key="4">
    <citation type="journal article" date="2004" name="Genome Res.">
        <title>The status, quality, and expansion of the NIH full-length cDNA project: the Mammalian Gene Collection (MGC).</title>
        <authorList>
            <consortium name="The MGC Project Team"/>
        </authorList>
    </citation>
    <scope>NUCLEOTIDE SEQUENCE [LARGE SCALE MRNA]</scope>
    <source>
        <tissue>Brain</tissue>
        <tissue>Kidney</tissue>
        <tissue>Leukocyte</tissue>
    </source>
</reference>
<reference key="5">
    <citation type="journal article" date="2007" name="BMC Genomics">
        <title>The full-ORF clone resource of the German cDNA consortium.</title>
        <authorList>
            <person name="Bechtel S."/>
            <person name="Rosenfelder H."/>
            <person name="Duda A."/>
            <person name="Schmidt C.P."/>
            <person name="Ernst U."/>
            <person name="Wellenreuther R."/>
            <person name="Mehrle A."/>
            <person name="Schuster C."/>
            <person name="Bahr A."/>
            <person name="Bloecker H."/>
            <person name="Heubner D."/>
            <person name="Hoerlein A."/>
            <person name="Michel G."/>
            <person name="Wedler H."/>
            <person name="Koehrer K."/>
            <person name="Ottenwaelder B."/>
            <person name="Poustka A."/>
            <person name="Wiemann S."/>
            <person name="Schupp I."/>
        </authorList>
    </citation>
    <scope>NUCLEOTIDE SEQUENCE [LARGE SCALE MRNA] OF 129-760</scope>
    <source>
        <tissue>Testis</tissue>
    </source>
</reference>
<reference key="6">
    <citation type="journal article" date="2004" name="Nat. Genet.">
        <title>Mutations in SEC63 cause autosomal dominant polycystic liver disease.</title>
        <authorList>
            <person name="Davila S."/>
            <person name="Furu L."/>
            <person name="Gharavi A.G."/>
            <person name="Tian X."/>
            <person name="Onoe T."/>
            <person name="Qian Q."/>
            <person name="Li A."/>
            <person name="Cai Y."/>
            <person name="Kamath P.S."/>
            <person name="King B.F."/>
            <person name="Azurmendi P.J."/>
            <person name="Tahvanainen P."/>
            <person name="Kaeaeriaeinen H."/>
            <person name="Hoeckerstedt K."/>
            <person name="Devuyst O."/>
            <person name="Pirson Y."/>
            <person name="Martin R.S."/>
            <person name="Lifton R.P."/>
            <person name="Tahvanainen E."/>
            <person name="Torres V.E."/>
            <person name="Somlo S."/>
        </authorList>
    </citation>
    <scope>TISSUE SPECIFICITY</scope>
    <scope>VARIANT PCLD2 GLU-568 DEL</scope>
</reference>
<reference key="7">
    <citation type="journal article" date="2008" name="Proc. Natl. Acad. Sci. U.S.A.">
        <title>A quantitative atlas of mitotic phosphorylation.</title>
        <authorList>
            <person name="Dephoure N."/>
            <person name="Zhou C."/>
            <person name="Villen J."/>
            <person name="Beausoleil S.A."/>
            <person name="Bakalarski C.E."/>
            <person name="Elledge S.J."/>
            <person name="Gygi S.P."/>
        </authorList>
    </citation>
    <scope>PHOSPHORYLATION [LARGE SCALE ANALYSIS] AT SER-742 AND SER-748</scope>
    <scope>IDENTIFICATION BY MASS SPECTROMETRY [LARGE SCALE ANALYSIS]</scope>
    <source>
        <tissue>Cervix carcinoma</tissue>
    </source>
</reference>
<reference key="8">
    <citation type="journal article" date="2009" name="Cell Stress Chaperones">
        <title>Guidelines for the nomenclature of the human heat shock proteins.</title>
        <authorList>
            <person name="Kampinga H.H."/>
            <person name="Hageman J."/>
            <person name="Vos M.J."/>
            <person name="Kubota H."/>
            <person name="Tanguay R.M."/>
            <person name="Bruford E.A."/>
            <person name="Cheetham M.E."/>
            <person name="Chen B."/>
            <person name="Hightower L.E."/>
        </authorList>
    </citation>
    <scope>NOMENCLATURE</scope>
</reference>
<reference key="9">
    <citation type="journal article" date="2011" name="BMC Syst. Biol.">
        <title>Initial characterization of the human central proteome.</title>
        <authorList>
            <person name="Burkard T.R."/>
            <person name="Planyavsky M."/>
            <person name="Kaupe I."/>
            <person name="Breitwieser F.P."/>
            <person name="Buerckstuemmer T."/>
            <person name="Bennett K.L."/>
            <person name="Superti-Furga G."/>
            <person name="Colinge J."/>
        </authorList>
    </citation>
    <scope>IDENTIFICATION BY MASS SPECTROMETRY [LARGE SCALE ANALYSIS]</scope>
</reference>
<reference key="10">
    <citation type="journal article" date="2012" name="J. Cell Sci.">
        <title>Different effects of Sec61alpha, Sec62 and Sec63 depletion on transport of polypeptides into the endoplasmic reticulum of mammalian cells.</title>
        <authorList>
            <person name="Lang S."/>
            <person name="Benedix J."/>
            <person name="Fedeles S.V."/>
            <person name="Schorr S."/>
            <person name="Schirra C."/>
            <person name="Schaeuble N."/>
            <person name="Jalal C."/>
            <person name="Greiner M."/>
            <person name="Hassdenteufel S."/>
            <person name="Tatzelt J."/>
            <person name="Kreutzer B."/>
            <person name="Edelmann L."/>
            <person name="Krause E."/>
            <person name="Rettig J."/>
            <person name="Somlo S."/>
            <person name="Zimmermann R."/>
            <person name="Dudek J."/>
        </authorList>
    </citation>
    <scope>FUNCTION</scope>
</reference>
<reference key="11">
    <citation type="journal article" date="2014" name="J. Proteomics">
        <title>An enzyme assisted RP-RPLC approach for in-depth analysis of human liver phosphoproteome.</title>
        <authorList>
            <person name="Bian Y."/>
            <person name="Song C."/>
            <person name="Cheng K."/>
            <person name="Dong M."/>
            <person name="Wang F."/>
            <person name="Huang J."/>
            <person name="Sun D."/>
            <person name="Wang L."/>
            <person name="Ye M."/>
            <person name="Zou H."/>
        </authorList>
    </citation>
    <scope>PHOSPHORYLATION [LARGE SCALE ANALYSIS] AT THR-537</scope>
    <scope>IDENTIFICATION BY MASS SPECTROMETRY [LARGE SCALE ANALYSIS]</scope>
    <source>
        <tissue>Liver</tissue>
    </source>
</reference>
<reference key="12">
    <citation type="journal article" date="2015" name="Proteomics">
        <title>N-terminome analysis of the human mitochondrial proteome.</title>
        <authorList>
            <person name="Vaca Jacome A.S."/>
            <person name="Rabilloud T."/>
            <person name="Schaeffer-Reiss C."/>
            <person name="Rompais M."/>
            <person name="Ayoub D."/>
            <person name="Lane L."/>
            <person name="Bairoch A."/>
            <person name="Van Dorsselaer A."/>
            <person name="Carapito C."/>
        </authorList>
    </citation>
    <scope>IDENTIFICATION BY MASS SPECTROMETRY [LARGE SCALE ANALYSIS]</scope>
</reference>
<reference key="13">
    <citation type="journal article" date="2018" name="Cell Rep.">
        <title>Chaperone-Mediated Sec61 Channel Gating during ER Import of Small Precursor Proteins Overcomes Sec61 Inhibitor-Reinforced Energy Barrier.</title>
        <authorList>
            <person name="Hassdenteufel S."/>
            <person name="Johnson N."/>
            <person name="Paton A.W."/>
            <person name="Paton J.C."/>
            <person name="High S."/>
            <person name="Zimmermann R."/>
        </authorList>
    </citation>
    <scope>FUNCTION</scope>
    <scope>MUTAGENESIS OF HIS-132 AND 735-GLY--ASP-760</scope>
</reference>
<reference key="14">
    <citation type="journal article" date="2017" name="J. Clin. Invest.">
        <title>Isolated polycystic liver disease genes define effectors of polycystin-1 function.</title>
        <authorList>
            <person name="Besse W."/>
            <person name="Dong K."/>
            <person name="Choi J."/>
            <person name="Punia S."/>
            <person name="Fedeles S.V."/>
            <person name="Choi M."/>
            <person name="Gallagher A.R."/>
            <person name="Huang E.B."/>
            <person name="Gulati A."/>
            <person name="Knight J."/>
            <person name="Mane S."/>
            <person name="Tahvanainen E."/>
            <person name="Tahvanainen P."/>
            <person name="Sanna-Cherchi S."/>
            <person name="Lifton R.P."/>
            <person name="Watnick T."/>
            <person name="Pei Y.P."/>
            <person name="Torres V.E."/>
            <person name="Somlo S."/>
        </authorList>
    </citation>
    <scope>INVOLVEMENT IN PCLD2</scope>
    <scope>VARIANTS PCLD2 7-GLN--ASP-760 DEL; 58-TRP--ASP-760 DEL; 98-ARG--ASP-760 DEL; 233-TYR--ASP-760 DEL; 239-ARG--ASP-760 DEL; 297-TYR--ASP-760 DEL; 417-GLU--ASP-760 DEL; 550-LYS--ASP-760 DEL AND 601-GLN--ASP-760 DEL</scope>
</reference>
<comment type="function">
    <text evidence="2 8 10">Mediates cotranslational and post-translational transport of certain precursor polypeptides across endoplasmic reticulum (ER) (PubMed:22375059, PubMed:29719251). Proposed to play an auxiliary role in recognition of precursors with short and apolar signal peptides. May cooperate with SEC62 and HSPA5/BiP to facilitate targeting of small presecretory proteins into the SEC61 channel-forming translocon complex, triggering channel opening for polypeptide translocation to the ER lumen (PubMed:29719251). Required for efficient PKD1/Polycystin-1 biogenesis and trafficking to the plasma membrane of the primary cilia (By similarity).</text>
</comment>
<comment type="subunit">
    <text evidence="1">The ER translocon complex consists of channel-forming core components SEC61A1, SEC61B and SEC61G and different auxiliary components such as SEC62 and SEC63.</text>
</comment>
<comment type="interaction">
    <interactant intactId="EBI-1045560">
        <id>Q9UGP8</id>
    </interactant>
    <interactant intactId="EBI-16439278">
        <id>Q6FHY5</id>
        <label>MEOX2</label>
    </interactant>
    <organismsDiffer>false</organismsDiffer>
    <experiments>3</experiments>
</comment>
<comment type="interaction">
    <interactant intactId="EBI-1045560">
        <id>Q9UGP8</id>
    </interactant>
    <interactant intactId="EBI-309684">
        <id>P97346</id>
        <label>Nxn</label>
    </interactant>
    <organismsDiffer>true</organismsDiffer>
    <experiments>6</experiments>
</comment>
<comment type="subcellular location">
    <subcellularLocation>
        <location>Endoplasmic reticulum membrane</location>
        <topology>Multi-pass membrane protein</topology>
    </subcellularLocation>
</comment>
<comment type="tissue specificity">
    <text evidence="7">Widely expressed, with high levels in the liver.</text>
</comment>
<comment type="disease" evidence="7 9">
    <disease id="DI-04751">
        <name>Polycystic liver disease 2 with or without kidney cysts</name>
        <acronym>PCLD2</acronym>
        <description>An autosomal dominant hepatobiliary disease characterized by overgrowth of biliary epithelium and supportive connective tissue, resulting in multiple liver cysts. A subset of patients may develop kidney cysts that usually do not result in clinically significant renal disease.</description>
        <dbReference type="MIM" id="617004"/>
    </disease>
    <text>The disease is caused by variants affecting the gene represented in this entry.</text>
</comment>
<comment type="sequence caution" evidence="13">
    <conflict type="miscellaneous discrepancy">
        <sequence resource="EMBL-CDS" id="AAH23598"/>
    </conflict>
    <text>Contaminating sequence. Potential poly-A sequence.</text>
</comment>
<keyword id="KW-0143">Chaperone</keyword>
<keyword id="KW-0175">Coiled coil</keyword>
<keyword id="KW-0225">Disease variant</keyword>
<keyword id="KW-0256">Endoplasmic reticulum</keyword>
<keyword id="KW-0472">Membrane</keyword>
<keyword id="KW-0597">Phosphoprotein</keyword>
<keyword id="KW-0653">Protein transport</keyword>
<keyword id="KW-1267">Proteomics identification</keyword>
<keyword id="KW-1185">Reference proteome</keyword>
<keyword id="KW-0677">Repeat</keyword>
<keyword id="KW-0812">Transmembrane</keyword>
<keyword id="KW-1133">Transmembrane helix</keyword>
<keyword id="KW-0813">Transport</keyword>
<dbReference type="EMBL" id="AJ011779">
    <property type="protein sequence ID" value="CAB46275.1"/>
    <property type="molecule type" value="mRNA"/>
</dbReference>
<dbReference type="EMBL" id="AF100141">
    <property type="protein sequence ID" value="AAC83375.1"/>
    <property type="molecule type" value="mRNA"/>
</dbReference>
<dbReference type="EMBL" id="AL024507">
    <property type="status" value="NOT_ANNOTATED_CDS"/>
    <property type="molecule type" value="Genomic_DNA"/>
</dbReference>
<dbReference type="EMBL" id="BC023598">
    <property type="protein sequence ID" value="AAH23598.1"/>
    <property type="status" value="ALT_SEQ"/>
    <property type="molecule type" value="mRNA"/>
</dbReference>
<dbReference type="EMBL" id="BC047221">
    <property type="protein sequence ID" value="AAH47221.1"/>
    <property type="molecule type" value="mRNA"/>
</dbReference>
<dbReference type="EMBL" id="BC048287">
    <property type="protein sequence ID" value="AAH48287.1"/>
    <property type="molecule type" value="mRNA"/>
</dbReference>
<dbReference type="EMBL" id="AL137338">
    <property type="protein sequence ID" value="CAB70701.1"/>
    <property type="molecule type" value="mRNA"/>
</dbReference>
<dbReference type="CCDS" id="CCDS5061.1"/>
<dbReference type="PIR" id="T46504">
    <property type="entry name" value="T46504"/>
</dbReference>
<dbReference type="RefSeq" id="NP_009145.1">
    <property type="nucleotide sequence ID" value="NM_007214.5"/>
</dbReference>
<dbReference type="BioGRID" id="116397">
    <property type="interactions" value="384"/>
</dbReference>
<dbReference type="FunCoup" id="Q9UGP8">
    <property type="interactions" value="3191"/>
</dbReference>
<dbReference type="IntAct" id="Q9UGP8">
    <property type="interactions" value="94"/>
</dbReference>
<dbReference type="MINT" id="Q9UGP8"/>
<dbReference type="STRING" id="9606.ENSP00000357998"/>
<dbReference type="TCDB" id="3.A.5.9.1">
    <property type="family name" value="the general secretory pathway (sec) family"/>
</dbReference>
<dbReference type="CarbonylDB" id="Q9UGP8"/>
<dbReference type="GlyGen" id="Q9UGP8">
    <property type="glycosylation" value="1 site, 1 O-linked glycan (1 site)"/>
</dbReference>
<dbReference type="iPTMnet" id="Q9UGP8"/>
<dbReference type="PhosphoSitePlus" id="Q9UGP8"/>
<dbReference type="SwissPalm" id="Q9UGP8"/>
<dbReference type="BioMuta" id="SEC63"/>
<dbReference type="DMDM" id="18203500"/>
<dbReference type="jPOST" id="Q9UGP8"/>
<dbReference type="MassIVE" id="Q9UGP8"/>
<dbReference type="PaxDb" id="9606-ENSP00000357998"/>
<dbReference type="PeptideAtlas" id="Q9UGP8"/>
<dbReference type="ProteomicsDB" id="84254"/>
<dbReference type="Pumba" id="Q9UGP8"/>
<dbReference type="Antibodypedia" id="32190">
    <property type="antibodies" value="136 antibodies from 24 providers"/>
</dbReference>
<dbReference type="DNASU" id="11231"/>
<dbReference type="Ensembl" id="ENST00000369002.9">
    <property type="protein sequence ID" value="ENSP00000357998.4"/>
    <property type="gene ID" value="ENSG00000025796.14"/>
</dbReference>
<dbReference type="GeneID" id="11231"/>
<dbReference type="KEGG" id="hsa:11231"/>
<dbReference type="MANE-Select" id="ENST00000369002.9">
    <property type="protein sequence ID" value="ENSP00000357998.4"/>
    <property type="RefSeq nucleotide sequence ID" value="NM_007214.5"/>
    <property type="RefSeq protein sequence ID" value="NP_009145.1"/>
</dbReference>
<dbReference type="UCSC" id="uc003psc.5">
    <property type="organism name" value="human"/>
</dbReference>
<dbReference type="AGR" id="HGNC:21082"/>
<dbReference type="CTD" id="11231"/>
<dbReference type="DisGeNET" id="11231"/>
<dbReference type="GeneCards" id="SEC63"/>
<dbReference type="HGNC" id="HGNC:21082">
    <property type="gene designation" value="SEC63"/>
</dbReference>
<dbReference type="HPA" id="ENSG00000025796">
    <property type="expression patterns" value="Low tissue specificity"/>
</dbReference>
<dbReference type="MalaCards" id="SEC63"/>
<dbReference type="MIM" id="608648">
    <property type="type" value="gene"/>
</dbReference>
<dbReference type="MIM" id="617004">
    <property type="type" value="phenotype"/>
</dbReference>
<dbReference type="neXtProt" id="NX_Q9UGP8"/>
<dbReference type="OpenTargets" id="ENSG00000025796"/>
<dbReference type="Orphanet" id="2924">
    <property type="disease" value="Isolated polycystic liver disease"/>
</dbReference>
<dbReference type="PharmGKB" id="PA134936990"/>
<dbReference type="VEuPathDB" id="HostDB:ENSG00000025796"/>
<dbReference type="eggNOG" id="KOG0721">
    <property type="taxonomic scope" value="Eukaryota"/>
</dbReference>
<dbReference type="GeneTree" id="ENSGT00390000001965"/>
<dbReference type="HOGENOM" id="CLU_014210_1_0_1"/>
<dbReference type="InParanoid" id="Q9UGP8"/>
<dbReference type="OMA" id="RAILHAH"/>
<dbReference type="OrthoDB" id="1734229at2759"/>
<dbReference type="PAN-GO" id="Q9UGP8">
    <property type="GO annotations" value="4 GO annotations based on evolutionary models"/>
</dbReference>
<dbReference type="PhylomeDB" id="Q9UGP8"/>
<dbReference type="TreeFam" id="TF105904"/>
<dbReference type="PathwayCommons" id="Q9UGP8"/>
<dbReference type="SignaLink" id="Q9UGP8"/>
<dbReference type="SIGNOR" id="Q9UGP8"/>
<dbReference type="BioGRID-ORCS" id="11231">
    <property type="hits" value="433 hits in 1158 CRISPR screens"/>
</dbReference>
<dbReference type="ChiTaRS" id="SEC63">
    <property type="organism name" value="human"/>
</dbReference>
<dbReference type="GeneWiki" id="SEC63"/>
<dbReference type="GenomeRNAi" id="11231"/>
<dbReference type="Pharos" id="Q9UGP8">
    <property type="development level" value="Tbio"/>
</dbReference>
<dbReference type="PRO" id="PR:Q9UGP8"/>
<dbReference type="Proteomes" id="UP000005640">
    <property type="component" value="Chromosome 6"/>
</dbReference>
<dbReference type="RNAct" id="Q9UGP8">
    <property type="molecule type" value="protein"/>
</dbReference>
<dbReference type="Bgee" id="ENSG00000025796">
    <property type="expression patterns" value="Expressed in colonic epithelium and 217 other cell types or tissues"/>
</dbReference>
<dbReference type="ExpressionAtlas" id="Q9UGP8">
    <property type="expression patterns" value="baseline and differential"/>
</dbReference>
<dbReference type="GO" id="GO:0005783">
    <property type="term" value="C:endoplasmic reticulum"/>
    <property type="evidence" value="ECO:0000314"/>
    <property type="project" value="HPA"/>
</dbReference>
<dbReference type="GO" id="GO:0016020">
    <property type="term" value="C:membrane"/>
    <property type="evidence" value="ECO:0000314"/>
    <property type="project" value="MGI"/>
</dbReference>
<dbReference type="GO" id="GO:0031207">
    <property type="term" value="C:Sec62/Sec63 complex"/>
    <property type="evidence" value="ECO:0000318"/>
    <property type="project" value="GO_Central"/>
</dbReference>
<dbReference type="GO" id="GO:0008320">
    <property type="term" value="F:protein transmembrane transporter activity"/>
    <property type="evidence" value="ECO:0000318"/>
    <property type="project" value="GO_Central"/>
</dbReference>
<dbReference type="GO" id="GO:0003723">
    <property type="term" value="F:RNA binding"/>
    <property type="evidence" value="ECO:0007005"/>
    <property type="project" value="UniProtKB"/>
</dbReference>
<dbReference type="GO" id="GO:0038023">
    <property type="term" value="F:signaling receptor activity"/>
    <property type="evidence" value="ECO:0000304"/>
    <property type="project" value="ProtInc"/>
</dbReference>
<dbReference type="GO" id="GO:0001889">
    <property type="term" value="P:liver development"/>
    <property type="evidence" value="ECO:0007669"/>
    <property type="project" value="Ensembl"/>
</dbReference>
<dbReference type="GO" id="GO:0071941">
    <property type="term" value="P:nitrogen cycle metabolic process"/>
    <property type="evidence" value="ECO:0007669"/>
    <property type="project" value="Ensembl"/>
</dbReference>
<dbReference type="GO" id="GO:0006620">
    <property type="term" value="P:post-translational protein targeting to endoplasmic reticulum membrane"/>
    <property type="evidence" value="ECO:0000315"/>
    <property type="project" value="MGI"/>
</dbReference>
<dbReference type="GO" id="GO:0031204">
    <property type="term" value="P:post-translational protein targeting to membrane, translocation"/>
    <property type="evidence" value="ECO:0000315"/>
    <property type="project" value="UniProtKB"/>
</dbReference>
<dbReference type="GO" id="GO:0006612">
    <property type="term" value="P:protein targeting to membrane"/>
    <property type="evidence" value="ECO:0000304"/>
    <property type="project" value="ProtInc"/>
</dbReference>
<dbReference type="GO" id="GO:0006614">
    <property type="term" value="P:SRP-dependent cotranslational protein targeting to membrane"/>
    <property type="evidence" value="ECO:0000315"/>
    <property type="project" value="MGI"/>
</dbReference>
<dbReference type="CDD" id="cd06257">
    <property type="entry name" value="DnaJ"/>
    <property type="match status" value="1"/>
</dbReference>
<dbReference type="FunFam" id="1.10.3380.10:FF:000003">
    <property type="entry name" value="SEC63 homolog, protein translocation regulator"/>
    <property type="match status" value="1"/>
</dbReference>
<dbReference type="FunFam" id="1.10.287.110:FF:000032">
    <property type="entry name" value="Translocation protein SEC63 homolog"/>
    <property type="match status" value="1"/>
</dbReference>
<dbReference type="FunFam" id="1.10.150.20:FF:000022">
    <property type="entry name" value="translocation protein SEC63 homolog"/>
    <property type="match status" value="1"/>
</dbReference>
<dbReference type="FunFam" id="2.60.40.150:FF:000072">
    <property type="entry name" value="translocation protein SEC63 homolog"/>
    <property type="match status" value="1"/>
</dbReference>
<dbReference type="Gene3D" id="1.10.150.20">
    <property type="entry name" value="5' to 3' exonuclease, C-terminal subdomain"/>
    <property type="match status" value="1"/>
</dbReference>
<dbReference type="Gene3D" id="2.60.40.150">
    <property type="entry name" value="C2 domain"/>
    <property type="match status" value="1"/>
</dbReference>
<dbReference type="Gene3D" id="1.10.287.110">
    <property type="entry name" value="DnaJ domain"/>
    <property type="match status" value="1"/>
</dbReference>
<dbReference type="Gene3D" id="1.10.3380.10">
    <property type="entry name" value="Sec63 N-terminal domain-like domain"/>
    <property type="match status" value="1"/>
</dbReference>
<dbReference type="InterPro" id="IPR035892">
    <property type="entry name" value="C2_domain_sf"/>
</dbReference>
<dbReference type="InterPro" id="IPR001623">
    <property type="entry name" value="DnaJ_domain"/>
</dbReference>
<dbReference type="InterPro" id="IPR014756">
    <property type="entry name" value="Ig_E-set"/>
</dbReference>
<dbReference type="InterPro" id="IPR036869">
    <property type="entry name" value="J_dom_sf"/>
</dbReference>
<dbReference type="InterPro" id="IPR004179">
    <property type="entry name" value="Sec63-dom"/>
</dbReference>
<dbReference type="PANTHER" id="PTHR24075">
    <property type="entry name" value="SEC63 DOMAIN-CONTAINING"/>
    <property type="match status" value="1"/>
</dbReference>
<dbReference type="PANTHER" id="PTHR24075:SF0">
    <property type="entry name" value="TRANSLOCATION PROTEIN SEC63 HOMOLOG"/>
    <property type="match status" value="1"/>
</dbReference>
<dbReference type="Pfam" id="PF00226">
    <property type="entry name" value="DnaJ"/>
    <property type="match status" value="1"/>
</dbReference>
<dbReference type="Pfam" id="PF02889">
    <property type="entry name" value="Sec63"/>
    <property type="match status" value="2"/>
</dbReference>
<dbReference type="PRINTS" id="PR00625">
    <property type="entry name" value="JDOMAIN"/>
</dbReference>
<dbReference type="SMART" id="SM00271">
    <property type="entry name" value="DnaJ"/>
    <property type="match status" value="1"/>
</dbReference>
<dbReference type="SMART" id="SM00973">
    <property type="entry name" value="Sec63"/>
    <property type="match status" value="1"/>
</dbReference>
<dbReference type="SUPFAM" id="SSF46565">
    <property type="entry name" value="Chaperone J-domain"/>
    <property type="match status" value="1"/>
</dbReference>
<dbReference type="SUPFAM" id="SSF81296">
    <property type="entry name" value="E set domains"/>
    <property type="match status" value="1"/>
</dbReference>
<dbReference type="SUPFAM" id="SSF158702">
    <property type="entry name" value="Sec63 N-terminal domain-like"/>
    <property type="match status" value="1"/>
</dbReference>
<dbReference type="PROSITE" id="PS50076">
    <property type="entry name" value="DNAJ_2"/>
    <property type="match status" value="1"/>
</dbReference>
<organism>
    <name type="scientific">Homo sapiens</name>
    <name type="common">Human</name>
    <dbReference type="NCBI Taxonomy" id="9606"/>
    <lineage>
        <taxon>Eukaryota</taxon>
        <taxon>Metazoa</taxon>
        <taxon>Chordata</taxon>
        <taxon>Craniata</taxon>
        <taxon>Vertebrata</taxon>
        <taxon>Euteleostomi</taxon>
        <taxon>Mammalia</taxon>
        <taxon>Eutheria</taxon>
        <taxon>Euarchontoglires</taxon>
        <taxon>Primates</taxon>
        <taxon>Haplorrhini</taxon>
        <taxon>Catarrhini</taxon>
        <taxon>Hominidae</taxon>
        <taxon>Homo</taxon>
    </lineage>
</organism>
<protein>
    <recommendedName>
        <fullName>Translocation protein SEC63 homolog</fullName>
    </recommendedName>
    <alternativeName>
        <fullName evidence="11">DnaJ homolog subfamily C member 23</fullName>
    </alternativeName>
</protein>
<feature type="chain" id="PRO_0000071097" description="Translocation protein SEC63 homolog">
    <location>
        <begin position="1"/>
        <end position="760"/>
    </location>
</feature>
<feature type="topological domain" description="Lumenal" evidence="3">
    <location>
        <begin position="1"/>
        <end position="14"/>
    </location>
</feature>
<feature type="transmembrane region" description="Helical" evidence="3">
    <location>
        <begin position="15"/>
        <end position="35"/>
    </location>
</feature>
<feature type="topological domain" description="Cytoplasmic" evidence="3">
    <location>
        <begin position="36"/>
        <end position="69"/>
    </location>
</feature>
<feature type="transmembrane region" description="Helical" evidence="3">
    <location>
        <begin position="70"/>
        <end position="90"/>
    </location>
</feature>
<feature type="topological domain" description="Lumenal" evidence="3">
    <location>
        <begin position="91"/>
        <end position="188"/>
    </location>
</feature>
<feature type="transmembrane region" description="Helical" evidence="3">
    <location>
        <begin position="189"/>
        <end position="209"/>
    </location>
</feature>
<feature type="topological domain" description="Cytoplasmic" evidence="3">
    <location>
        <begin position="210"/>
        <end position="760"/>
    </location>
</feature>
<feature type="domain" description="J" evidence="4">
    <location>
        <begin position="104"/>
        <end position="165"/>
    </location>
</feature>
<feature type="domain" description="SEC63 1">
    <location>
        <begin position="197"/>
        <end position="541"/>
    </location>
</feature>
<feature type="domain" description="SEC63 2">
    <location>
        <begin position="637"/>
        <end position="714"/>
    </location>
</feature>
<feature type="region of interest" description="Disordered" evidence="5">
    <location>
        <begin position="492"/>
        <end position="617"/>
    </location>
</feature>
<feature type="region of interest" description="Disordered" evidence="5">
    <location>
        <begin position="720"/>
        <end position="760"/>
    </location>
</feature>
<feature type="coiled-coil region" evidence="3">
    <location>
        <begin position="597"/>
        <end position="635"/>
    </location>
</feature>
<feature type="compositionally biased region" description="Basic residues" evidence="5">
    <location>
        <begin position="518"/>
        <end position="536"/>
    </location>
</feature>
<feature type="compositionally biased region" description="Basic and acidic residues" evidence="5">
    <location>
        <begin position="582"/>
        <end position="608"/>
    </location>
</feature>
<feature type="compositionally biased region" description="Acidic residues" evidence="5">
    <location>
        <begin position="733"/>
        <end position="760"/>
    </location>
</feature>
<feature type="modified residue" description="Phosphothreonine" evidence="16">
    <location>
        <position position="537"/>
    </location>
</feature>
<feature type="modified residue" description="Phosphoserine" evidence="15">
    <location>
        <position position="742"/>
    </location>
</feature>
<feature type="modified residue" description="Phosphoserine" evidence="15">
    <location>
        <position position="748"/>
    </location>
</feature>
<feature type="sequence variant" id="VAR_080944" description="In PCLD2." evidence="9">
    <location>
        <begin position="7"/>
        <end position="760"/>
    </location>
</feature>
<feature type="sequence variant" id="VAR_080945" description="In PCLD2." evidence="9">
    <location>
        <begin position="58"/>
        <end position="760"/>
    </location>
</feature>
<feature type="sequence variant" id="VAR_080946" description="In PCLD2." evidence="9">
    <location>
        <begin position="98"/>
        <end position="760"/>
    </location>
</feature>
<feature type="sequence variant" id="VAR_080947" description="In PCLD2." evidence="9">
    <location>
        <begin position="233"/>
        <end position="760"/>
    </location>
</feature>
<feature type="sequence variant" id="VAR_080948" description="In PCLD2." evidence="9">
    <location>
        <begin position="239"/>
        <end position="760"/>
    </location>
</feature>
<feature type="sequence variant" id="VAR_080949" description="In PCLD2." evidence="9">
    <location>
        <begin position="297"/>
        <end position="760"/>
    </location>
</feature>
<feature type="sequence variant" id="VAR_080950" description="In PCLD2." evidence="9">
    <location>
        <begin position="417"/>
        <end position="760"/>
    </location>
</feature>
<feature type="sequence variant" id="VAR_080951" description="In PCLD2." evidence="9">
    <location>
        <begin position="550"/>
        <end position="760"/>
    </location>
</feature>
<feature type="sequence variant" id="VAR_061146" description="In dbSNP:rs17854547." evidence="6">
    <original>V</original>
    <variation>I</variation>
    <location>
        <position position="556"/>
    </location>
</feature>
<feature type="sequence variant" id="VAR_019645" description="In PCLD2." evidence="7">
    <location>
        <position position="568"/>
    </location>
</feature>
<feature type="sequence variant" id="VAR_080952" description="In PCLD2." evidence="9">
    <location>
        <begin position="601"/>
        <end position="760"/>
    </location>
</feature>
<feature type="mutagenesis site" description="Reduces cotranslational translocation of APLN precursor/preproapelin." evidence="10">
    <original>H</original>
    <variation>Q</variation>
    <location>
        <position position="132"/>
    </location>
</feature>
<feature type="mutagenesis site" description="Reduces cotranslational translocation of APLN precursor/preproapelin." evidence="10">
    <location>
        <begin position="735"/>
        <end position="760"/>
    </location>
</feature>
<feature type="sequence conflict" description="In Ref. 4; AAH23598." evidence="13" ref="4">
    <original>A</original>
    <variation>V</variation>
    <location>
        <position position="115"/>
    </location>
</feature>
<gene>
    <name evidence="12 14" type="primary">SEC63</name>
    <name evidence="11" type="synonym">DNAJC23</name>
    <name type="synonym">SEC63L</name>
</gene>
<name>SEC63_HUMAN</name>
<proteinExistence type="evidence at protein level"/>